<sequence length="229" mass="25720">MYDIKKWKHVFKLDPAKTISDEDLDKICMSETDAIIIGGTDNVTEDNVIQLMSRVRRYPLPLVLEISNLESTMPGFDFYFAPMVLNSRDVTYHNGILLEALKEYGHMMDFDEVIFQGYVVLNPDSKVAEKTQANTDIDTQDIEAYALMTDKVYRFPIMYIEYSGTFGDMEKVRAAKDNLEEAHIFYGGGISSISDAKAAAGVADTIVVGNLVYNDIKQALKTVKIKGKS</sequence>
<proteinExistence type="inferred from homology"/>
<feature type="chain" id="PRO_1000119134" description="Heptaprenylglyceryl phosphate synthase">
    <location>
        <begin position="1"/>
        <end position="229"/>
    </location>
</feature>
<feature type="binding site" evidence="1">
    <location>
        <position position="12"/>
    </location>
    <ligand>
        <name>sn-glycerol 1-phosphate</name>
        <dbReference type="ChEBI" id="CHEBI:57685"/>
    </ligand>
</feature>
<feature type="binding site" evidence="1">
    <location>
        <position position="14"/>
    </location>
    <ligand>
        <name>Mg(2+)</name>
        <dbReference type="ChEBI" id="CHEBI:18420"/>
    </ligand>
</feature>
<feature type="binding site" evidence="1">
    <location>
        <position position="40"/>
    </location>
    <ligand>
        <name>Mg(2+)</name>
        <dbReference type="ChEBI" id="CHEBI:18420"/>
    </ligand>
</feature>
<feature type="binding site" evidence="1">
    <location>
        <begin position="159"/>
        <end position="164"/>
    </location>
    <ligand>
        <name>sn-glycerol 1-phosphate</name>
        <dbReference type="ChEBI" id="CHEBI:57685"/>
    </ligand>
</feature>
<feature type="binding site" evidence="1">
    <location>
        <position position="189"/>
    </location>
    <ligand>
        <name>sn-glycerol 1-phosphate</name>
        <dbReference type="ChEBI" id="CHEBI:57685"/>
    </ligand>
</feature>
<feature type="binding site" evidence="1">
    <location>
        <begin position="209"/>
        <end position="210"/>
    </location>
    <ligand>
        <name>sn-glycerol 1-phosphate</name>
        <dbReference type="ChEBI" id="CHEBI:57685"/>
    </ligand>
</feature>
<gene>
    <name evidence="1" type="primary">pcrB</name>
    <name type="ordered locus">Sca_1479</name>
</gene>
<protein>
    <recommendedName>
        <fullName evidence="1">Heptaprenylglyceryl phosphate synthase</fullName>
        <shortName evidence="1">HepGP synthase</shortName>
        <ecNumber evidence="1">2.5.1.n9</ecNumber>
    </recommendedName>
    <alternativeName>
        <fullName evidence="1">Glycerol-1-phosphate heptaprenyltransferase</fullName>
    </alternativeName>
</protein>
<organism>
    <name type="scientific">Staphylococcus carnosus (strain TM300)</name>
    <dbReference type="NCBI Taxonomy" id="396513"/>
    <lineage>
        <taxon>Bacteria</taxon>
        <taxon>Bacillati</taxon>
        <taxon>Bacillota</taxon>
        <taxon>Bacilli</taxon>
        <taxon>Bacillales</taxon>
        <taxon>Staphylococcaceae</taxon>
        <taxon>Staphylococcus</taxon>
    </lineage>
</organism>
<keyword id="KW-0444">Lipid biosynthesis</keyword>
<keyword id="KW-0443">Lipid metabolism</keyword>
<keyword id="KW-0460">Magnesium</keyword>
<keyword id="KW-0479">Metal-binding</keyword>
<keyword id="KW-0594">Phospholipid biosynthesis</keyword>
<keyword id="KW-1208">Phospholipid metabolism</keyword>
<keyword id="KW-1185">Reference proteome</keyword>
<keyword id="KW-0808">Transferase</keyword>
<name>PCRB_STACT</name>
<evidence type="ECO:0000255" key="1">
    <source>
        <dbReference type="HAMAP-Rule" id="MF_00112"/>
    </source>
</evidence>
<accession>B9DMR9</accession>
<dbReference type="EC" id="2.5.1.n9" evidence="1"/>
<dbReference type="EMBL" id="AM295250">
    <property type="protein sequence ID" value="CAL28384.1"/>
    <property type="molecule type" value="Genomic_DNA"/>
</dbReference>
<dbReference type="RefSeq" id="WP_015900724.1">
    <property type="nucleotide sequence ID" value="NC_012121.1"/>
</dbReference>
<dbReference type="SMR" id="B9DMR9"/>
<dbReference type="GeneID" id="93793934"/>
<dbReference type="KEGG" id="sca:SCA_1479"/>
<dbReference type="eggNOG" id="COG1646">
    <property type="taxonomic scope" value="Bacteria"/>
</dbReference>
<dbReference type="HOGENOM" id="CLU_095211_0_0_9"/>
<dbReference type="OrthoDB" id="2381757at2"/>
<dbReference type="BioCyc" id="SCAR396513:SCA_RS07520-MONOMER"/>
<dbReference type="UniPathway" id="UPA00940"/>
<dbReference type="Proteomes" id="UP000000444">
    <property type="component" value="Chromosome"/>
</dbReference>
<dbReference type="GO" id="GO:0120536">
    <property type="term" value="F:heptaprenylglyceryl phosphate synthase activity"/>
    <property type="evidence" value="ECO:0007669"/>
    <property type="project" value="RHEA"/>
</dbReference>
<dbReference type="GO" id="GO:0000287">
    <property type="term" value="F:magnesium ion binding"/>
    <property type="evidence" value="ECO:0007669"/>
    <property type="project" value="UniProtKB-UniRule"/>
</dbReference>
<dbReference type="GO" id="GO:0046474">
    <property type="term" value="P:glycerophospholipid biosynthetic process"/>
    <property type="evidence" value="ECO:0007669"/>
    <property type="project" value="UniProtKB-UniRule"/>
</dbReference>
<dbReference type="CDD" id="cd02812">
    <property type="entry name" value="PcrB_like"/>
    <property type="match status" value="1"/>
</dbReference>
<dbReference type="FunFam" id="3.20.20.390:FF:000001">
    <property type="entry name" value="Heptaprenylglyceryl phosphate synthase"/>
    <property type="match status" value="1"/>
</dbReference>
<dbReference type="Gene3D" id="3.20.20.390">
    <property type="entry name" value="FMN-linked oxidoreductases"/>
    <property type="match status" value="1"/>
</dbReference>
<dbReference type="HAMAP" id="MF_00112">
    <property type="entry name" value="GGGP_HepGP_synthase"/>
    <property type="match status" value="1"/>
</dbReference>
<dbReference type="InterPro" id="IPR039074">
    <property type="entry name" value="GGGP/HepGP_synthase_I"/>
</dbReference>
<dbReference type="InterPro" id="IPR038597">
    <property type="entry name" value="GGGP/HepGP_synthase_sf"/>
</dbReference>
<dbReference type="InterPro" id="IPR008205">
    <property type="entry name" value="GGGP_HepGP_synthase"/>
</dbReference>
<dbReference type="NCBIfam" id="TIGR01768">
    <property type="entry name" value="GGGP-family"/>
    <property type="match status" value="1"/>
</dbReference>
<dbReference type="NCBIfam" id="NF003197">
    <property type="entry name" value="PRK04169.1-1"/>
    <property type="match status" value="1"/>
</dbReference>
<dbReference type="NCBIfam" id="NF003199">
    <property type="entry name" value="PRK04169.1-3"/>
    <property type="match status" value="1"/>
</dbReference>
<dbReference type="NCBIfam" id="NF003200">
    <property type="entry name" value="PRK04169.1-4"/>
    <property type="match status" value="1"/>
</dbReference>
<dbReference type="PANTHER" id="PTHR40029">
    <property type="match status" value="1"/>
</dbReference>
<dbReference type="PANTHER" id="PTHR40029:SF2">
    <property type="entry name" value="HEPTAPRENYLGLYCERYL PHOSPHATE SYNTHASE"/>
    <property type="match status" value="1"/>
</dbReference>
<dbReference type="Pfam" id="PF01884">
    <property type="entry name" value="PcrB"/>
    <property type="match status" value="1"/>
</dbReference>
<dbReference type="SUPFAM" id="SSF51395">
    <property type="entry name" value="FMN-linked oxidoreductases"/>
    <property type="match status" value="1"/>
</dbReference>
<reference key="1">
    <citation type="journal article" date="2009" name="Appl. Environ. Microbiol.">
        <title>Genome analysis of the meat starter culture bacterium Staphylococcus carnosus TM300.</title>
        <authorList>
            <person name="Rosenstein R."/>
            <person name="Nerz C."/>
            <person name="Biswas L."/>
            <person name="Resch A."/>
            <person name="Raddatz G."/>
            <person name="Schuster S.C."/>
            <person name="Goetz F."/>
        </authorList>
    </citation>
    <scope>NUCLEOTIDE SEQUENCE [LARGE SCALE GENOMIC DNA]</scope>
    <source>
        <strain>TM300</strain>
    </source>
</reference>
<comment type="function">
    <text evidence="1">Prenyltransferase that catalyzes in vivo the transfer of the heptaprenyl moiety of heptaprenyl pyrophosphate (HepPP; 35 carbon atoms) to the C3 hydroxyl of sn-glycerol-1-phosphate (G1P), producing heptaprenylglyceryl phosphate (HepGP). This reaction is an ether-bond-formation step in the biosynthesis of archaea-type G1P-based membrane lipids found in Bacillales.</text>
</comment>
<comment type="catalytic activity">
    <reaction evidence="1">
        <text>sn-glycerol 1-phosphate + all-trans-heptaprenyl diphosphate = 3-heptaprenyl-sn-glycero-1-phosphate + diphosphate</text>
        <dbReference type="Rhea" id="RHEA:33495"/>
        <dbReference type="ChEBI" id="CHEBI:33019"/>
        <dbReference type="ChEBI" id="CHEBI:57685"/>
        <dbReference type="ChEBI" id="CHEBI:58206"/>
        <dbReference type="ChEBI" id="CHEBI:64781"/>
        <dbReference type="EC" id="2.5.1.n9"/>
    </reaction>
</comment>
<comment type="cofactor">
    <cofactor evidence="1">
        <name>Mg(2+)</name>
        <dbReference type="ChEBI" id="CHEBI:18420"/>
    </cofactor>
</comment>
<comment type="pathway">
    <text evidence="1">Membrane lipid metabolism; glycerophospholipid metabolism.</text>
</comment>
<comment type="subunit">
    <text evidence="1">Homodimer.</text>
</comment>
<comment type="similarity">
    <text evidence="1">Belongs to the GGGP/HepGP synthase family. Group I subfamily.</text>
</comment>